<organism>
    <name type="scientific">Bacillus thuringiensis (strain Al Hakam)</name>
    <dbReference type="NCBI Taxonomy" id="412694"/>
    <lineage>
        <taxon>Bacteria</taxon>
        <taxon>Bacillati</taxon>
        <taxon>Bacillota</taxon>
        <taxon>Bacilli</taxon>
        <taxon>Bacillales</taxon>
        <taxon>Bacillaceae</taxon>
        <taxon>Bacillus</taxon>
        <taxon>Bacillus cereus group</taxon>
    </lineage>
</organism>
<evidence type="ECO:0000255" key="1">
    <source>
        <dbReference type="HAMAP-Rule" id="MF_01493"/>
    </source>
</evidence>
<evidence type="ECO:0000256" key="2">
    <source>
        <dbReference type="SAM" id="MobiDB-lite"/>
    </source>
</evidence>
<accession>A0R8U6</accession>
<gene>
    <name evidence="1" type="primary">cshA</name>
    <name type="ordered locus">BALH_0232</name>
</gene>
<name>CSHA_BACAH</name>
<sequence length="528" mass="58944">MTTFRELGLSDSLLQSVESMGFEEATPIQAETIPHALQGKDIIGQAQTGTGKTAAFGLPLLDKVDTHKESVQGIVIAPTRELAIQVGEELYKIGKHKRVRILPIYGGQDINRQIRALKKHPHIIVGTPGRILDHINRKTLRLQNVETVVLDEADEMLNMGFIEDIEAILTDVPETHQTLLFSATMPDPIRRIAERFMTEPQHIKVKAKEVTMPNIQQFYLEVQEKKKFDVLTRLLDIQSPELAIVFGRTKRRVDELSEALNLRGYAAEGIHGDLTQAKRMSVLRKFKEGSIEVLVATDVAARGLDISGVTHVYNFDIPQDPESYVHRIGRTGRAGKKGIAMLFVTPRESGQLKNIERTTKRKMDRMDAPTLDEALEGQQRLIAEKLQSTIENENLAYYKRIAEEMLEENDSVTVVAAALKMMTKEPDTTPIALTSEPPVVSRGGGSKKRGGNGGGYRDGNRNRSRDGRGGDGRNRDRNRDGRNRDGNRDRNREGSRDGNRGRRGEGQGRPGSSNGRGERKHHSRKPQA</sequence>
<proteinExistence type="inferred from homology"/>
<feature type="chain" id="PRO_0000280055" description="DEAD-box ATP-dependent RNA helicase CshA">
    <location>
        <begin position="1"/>
        <end position="528"/>
    </location>
</feature>
<feature type="domain" description="Helicase ATP-binding" evidence="1">
    <location>
        <begin position="33"/>
        <end position="203"/>
    </location>
</feature>
<feature type="domain" description="Helicase C-terminal" evidence="1">
    <location>
        <begin position="214"/>
        <end position="374"/>
    </location>
</feature>
<feature type="region of interest" description="Disordered" evidence="2">
    <location>
        <begin position="428"/>
        <end position="528"/>
    </location>
</feature>
<feature type="short sequence motif" description="Q motif">
    <location>
        <begin position="2"/>
        <end position="30"/>
    </location>
</feature>
<feature type="short sequence motif" description="DEAD box">
    <location>
        <begin position="151"/>
        <end position="154"/>
    </location>
</feature>
<feature type="compositionally biased region" description="Basic and acidic residues" evidence="2">
    <location>
        <begin position="458"/>
        <end position="506"/>
    </location>
</feature>
<feature type="compositionally biased region" description="Basic residues" evidence="2">
    <location>
        <begin position="518"/>
        <end position="528"/>
    </location>
</feature>
<feature type="binding site" evidence="1">
    <location>
        <begin position="46"/>
        <end position="53"/>
    </location>
    <ligand>
        <name>ATP</name>
        <dbReference type="ChEBI" id="CHEBI:30616"/>
    </ligand>
</feature>
<dbReference type="EC" id="3.6.4.13" evidence="1"/>
<dbReference type="EMBL" id="CP000485">
    <property type="protein sequence ID" value="ABK83639.1"/>
    <property type="molecule type" value="Genomic_DNA"/>
</dbReference>
<dbReference type="RefSeq" id="WP_000206587.1">
    <property type="nucleotide sequence ID" value="NC_008600.1"/>
</dbReference>
<dbReference type="SMR" id="A0R8U6"/>
<dbReference type="KEGG" id="btl:BALH_0232"/>
<dbReference type="HOGENOM" id="CLU_003041_21_0_9"/>
<dbReference type="GO" id="GO:0043590">
    <property type="term" value="C:bacterial nucleoid"/>
    <property type="evidence" value="ECO:0000250"/>
    <property type="project" value="UniProtKB"/>
</dbReference>
<dbReference type="GO" id="GO:0005829">
    <property type="term" value="C:cytosol"/>
    <property type="evidence" value="ECO:0007669"/>
    <property type="project" value="TreeGrafter"/>
</dbReference>
<dbReference type="GO" id="GO:0005840">
    <property type="term" value="C:ribosome"/>
    <property type="evidence" value="ECO:0007669"/>
    <property type="project" value="TreeGrafter"/>
</dbReference>
<dbReference type="GO" id="GO:0005524">
    <property type="term" value="F:ATP binding"/>
    <property type="evidence" value="ECO:0000250"/>
    <property type="project" value="UniProtKB"/>
</dbReference>
<dbReference type="GO" id="GO:0016887">
    <property type="term" value="F:ATP hydrolysis activity"/>
    <property type="evidence" value="ECO:0007669"/>
    <property type="project" value="RHEA"/>
</dbReference>
<dbReference type="GO" id="GO:0003723">
    <property type="term" value="F:RNA binding"/>
    <property type="evidence" value="ECO:0000250"/>
    <property type="project" value="UniProtKB"/>
</dbReference>
<dbReference type="GO" id="GO:0003724">
    <property type="term" value="F:RNA helicase activity"/>
    <property type="evidence" value="ECO:0000250"/>
    <property type="project" value="UniProtKB"/>
</dbReference>
<dbReference type="GO" id="GO:0033592">
    <property type="term" value="F:RNA strand annealing activity"/>
    <property type="evidence" value="ECO:0007669"/>
    <property type="project" value="TreeGrafter"/>
</dbReference>
<dbReference type="GO" id="GO:0009409">
    <property type="term" value="P:response to cold"/>
    <property type="evidence" value="ECO:0007669"/>
    <property type="project" value="TreeGrafter"/>
</dbReference>
<dbReference type="GO" id="GO:0006401">
    <property type="term" value="P:RNA catabolic process"/>
    <property type="evidence" value="ECO:0007669"/>
    <property type="project" value="UniProtKB-UniRule"/>
</dbReference>
<dbReference type="CDD" id="cd00268">
    <property type="entry name" value="DEADc"/>
    <property type="match status" value="1"/>
</dbReference>
<dbReference type="CDD" id="cd18787">
    <property type="entry name" value="SF2_C_DEAD"/>
    <property type="match status" value="1"/>
</dbReference>
<dbReference type="FunFam" id="3.40.50.300:FF:000108">
    <property type="entry name" value="ATP-dependent RNA helicase RhlE"/>
    <property type="match status" value="1"/>
</dbReference>
<dbReference type="FunFam" id="3.40.50.300:FF:000783">
    <property type="entry name" value="DEAD-box ATP-dependent RNA helicase CshA"/>
    <property type="match status" value="1"/>
</dbReference>
<dbReference type="Gene3D" id="3.40.50.300">
    <property type="entry name" value="P-loop containing nucleotide triphosphate hydrolases"/>
    <property type="match status" value="2"/>
</dbReference>
<dbReference type="HAMAP" id="MF_01493">
    <property type="entry name" value="DEAD_helicase_CshA"/>
    <property type="match status" value="1"/>
</dbReference>
<dbReference type="InterPro" id="IPR011545">
    <property type="entry name" value="DEAD/DEAH_box_helicase_dom"/>
</dbReference>
<dbReference type="InterPro" id="IPR050547">
    <property type="entry name" value="DEAD_box_RNA_helicases"/>
</dbReference>
<dbReference type="InterPro" id="IPR030880">
    <property type="entry name" value="DEAD_helicase_CshA"/>
</dbReference>
<dbReference type="InterPro" id="IPR014001">
    <property type="entry name" value="Helicase_ATP-bd"/>
</dbReference>
<dbReference type="InterPro" id="IPR001650">
    <property type="entry name" value="Helicase_C-like"/>
</dbReference>
<dbReference type="InterPro" id="IPR027417">
    <property type="entry name" value="P-loop_NTPase"/>
</dbReference>
<dbReference type="InterPro" id="IPR000629">
    <property type="entry name" value="RNA-helicase_DEAD-box_CS"/>
</dbReference>
<dbReference type="InterPro" id="IPR014014">
    <property type="entry name" value="RNA_helicase_DEAD_Q_motif"/>
</dbReference>
<dbReference type="PANTHER" id="PTHR47963">
    <property type="entry name" value="DEAD-BOX ATP-DEPENDENT RNA HELICASE 47, MITOCHONDRIAL"/>
    <property type="match status" value="1"/>
</dbReference>
<dbReference type="PANTHER" id="PTHR47963:SF5">
    <property type="entry name" value="DEAD-BOX ATP-DEPENDENT RNA HELICASE CSHA"/>
    <property type="match status" value="1"/>
</dbReference>
<dbReference type="Pfam" id="PF00270">
    <property type="entry name" value="DEAD"/>
    <property type="match status" value="1"/>
</dbReference>
<dbReference type="Pfam" id="PF25399">
    <property type="entry name" value="DeaD_dimer"/>
    <property type="match status" value="1"/>
</dbReference>
<dbReference type="Pfam" id="PF00271">
    <property type="entry name" value="Helicase_C"/>
    <property type="match status" value="1"/>
</dbReference>
<dbReference type="SMART" id="SM00487">
    <property type="entry name" value="DEXDc"/>
    <property type="match status" value="1"/>
</dbReference>
<dbReference type="SMART" id="SM00490">
    <property type="entry name" value="HELICc"/>
    <property type="match status" value="1"/>
</dbReference>
<dbReference type="SUPFAM" id="SSF52540">
    <property type="entry name" value="P-loop containing nucleoside triphosphate hydrolases"/>
    <property type="match status" value="1"/>
</dbReference>
<dbReference type="PROSITE" id="PS00039">
    <property type="entry name" value="DEAD_ATP_HELICASE"/>
    <property type="match status" value="1"/>
</dbReference>
<dbReference type="PROSITE" id="PS51192">
    <property type="entry name" value="HELICASE_ATP_BIND_1"/>
    <property type="match status" value="1"/>
</dbReference>
<dbReference type="PROSITE" id="PS51194">
    <property type="entry name" value="HELICASE_CTER"/>
    <property type="match status" value="1"/>
</dbReference>
<dbReference type="PROSITE" id="PS51195">
    <property type="entry name" value="Q_MOTIF"/>
    <property type="match status" value="1"/>
</dbReference>
<keyword id="KW-0067">ATP-binding</keyword>
<keyword id="KW-0963">Cytoplasm</keyword>
<keyword id="KW-0347">Helicase</keyword>
<keyword id="KW-0378">Hydrolase</keyword>
<keyword id="KW-0547">Nucleotide-binding</keyword>
<keyword id="KW-0694">RNA-binding</keyword>
<keyword id="KW-0346">Stress response</keyword>
<reference key="1">
    <citation type="journal article" date="2007" name="J. Bacteriol.">
        <title>The complete genome sequence of Bacillus thuringiensis Al Hakam.</title>
        <authorList>
            <person name="Challacombe J.F."/>
            <person name="Altherr M.R."/>
            <person name="Xie G."/>
            <person name="Bhotika S.S."/>
            <person name="Brown N."/>
            <person name="Bruce D."/>
            <person name="Campbell C.S."/>
            <person name="Campbell M.L."/>
            <person name="Chen J."/>
            <person name="Chertkov O."/>
            <person name="Cleland C."/>
            <person name="Dimitrijevic M."/>
            <person name="Doggett N.A."/>
            <person name="Fawcett J.J."/>
            <person name="Glavina T."/>
            <person name="Goodwin L.A."/>
            <person name="Green L.D."/>
            <person name="Han C.S."/>
            <person name="Hill K.K."/>
            <person name="Hitchcock P."/>
            <person name="Jackson P.J."/>
            <person name="Keim P."/>
            <person name="Kewalramani A.R."/>
            <person name="Longmire J."/>
            <person name="Lucas S."/>
            <person name="Malfatti S."/>
            <person name="Martinez D."/>
            <person name="McMurry K."/>
            <person name="Meincke L.J."/>
            <person name="Misra M."/>
            <person name="Moseman B.L."/>
            <person name="Mundt M."/>
            <person name="Munk A.C."/>
            <person name="Okinaka R.T."/>
            <person name="Parson-Quintana B."/>
            <person name="Reilly L.P."/>
            <person name="Richardson P."/>
            <person name="Robinson D.L."/>
            <person name="Saunders E."/>
            <person name="Tapia R."/>
            <person name="Tesmer J.G."/>
            <person name="Thayer N."/>
            <person name="Thompson L.S."/>
            <person name="Tice H."/>
            <person name="Ticknor L.O."/>
            <person name="Wills P.L."/>
            <person name="Gilna P."/>
            <person name="Brettin T.S."/>
        </authorList>
    </citation>
    <scope>NUCLEOTIDE SEQUENCE [LARGE SCALE GENOMIC DNA]</scope>
    <source>
        <strain>Al Hakam</strain>
    </source>
</reference>
<protein>
    <recommendedName>
        <fullName evidence="1">DEAD-box ATP-dependent RNA helicase CshA</fullName>
        <ecNumber evidence="1">3.6.4.13</ecNumber>
    </recommendedName>
</protein>
<comment type="function">
    <text evidence="1">DEAD-box RNA helicase possibly involved in RNA degradation. Unwinds dsRNA in both 5'- and 3'-directions, has RNA-dependent ATPase activity.</text>
</comment>
<comment type="catalytic activity">
    <reaction evidence="1">
        <text>ATP + H2O = ADP + phosphate + H(+)</text>
        <dbReference type="Rhea" id="RHEA:13065"/>
        <dbReference type="ChEBI" id="CHEBI:15377"/>
        <dbReference type="ChEBI" id="CHEBI:15378"/>
        <dbReference type="ChEBI" id="CHEBI:30616"/>
        <dbReference type="ChEBI" id="CHEBI:43474"/>
        <dbReference type="ChEBI" id="CHEBI:456216"/>
        <dbReference type="EC" id="3.6.4.13"/>
    </reaction>
</comment>
<comment type="subunit">
    <text evidence="1">Oligomerizes, may be a member of the RNA degradosome.</text>
</comment>
<comment type="subcellular location">
    <subcellularLocation>
        <location evidence="1">Cytoplasm</location>
    </subcellularLocation>
</comment>
<comment type="similarity">
    <text evidence="1">Belongs to the DEAD box helicase family. CshA subfamily.</text>
</comment>